<accession>Q7D255</accession>
<dbReference type="EC" id="1.8.4.11" evidence="1"/>
<dbReference type="EMBL" id="AE007869">
    <property type="protein sequence ID" value="AAK85945.2"/>
    <property type="molecule type" value="Genomic_DNA"/>
</dbReference>
<dbReference type="RefSeq" id="NP_353160.2">
    <property type="nucleotide sequence ID" value="NC_003062.2"/>
</dbReference>
<dbReference type="RefSeq" id="WP_006309948.1">
    <property type="nucleotide sequence ID" value="NC_003062.2"/>
</dbReference>
<dbReference type="SMR" id="Q7D255"/>
<dbReference type="STRING" id="176299.Atu0125"/>
<dbReference type="EnsemblBacteria" id="AAK85945">
    <property type="protein sequence ID" value="AAK85945"/>
    <property type="gene ID" value="Atu0125"/>
</dbReference>
<dbReference type="GeneID" id="1132163"/>
<dbReference type="KEGG" id="atu:Atu0125"/>
<dbReference type="PATRIC" id="fig|176299.10.peg.116"/>
<dbReference type="eggNOG" id="COG0225">
    <property type="taxonomic scope" value="Bacteria"/>
</dbReference>
<dbReference type="HOGENOM" id="CLU_031040_10_3_5"/>
<dbReference type="OrthoDB" id="4174719at2"/>
<dbReference type="PhylomeDB" id="Q7D255"/>
<dbReference type="BioCyc" id="AGRO:ATU0125-MONOMER"/>
<dbReference type="Proteomes" id="UP000000813">
    <property type="component" value="Chromosome circular"/>
</dbReference>
<dbReference type="GO" id="GO:0005737">
    <property type="term" value="C:cytoplasm"/>
    <property type="evidence" value="ECO:0007669"/>
    <property type="project" value="TreeGrafter"/>
</dbReference>
<dbReference type="GO" id="GO:0036456">
    <property type="term" value="F:L-methionine-(S)-S-oxide reductase activity"/>
    <property type="evidence" value="ECO:0007669"/>
    <property type="project" value="TreeGrafter"/>
</dbReference>
<dbReference type="GO" id="GO:0008113">
    <property type="term" value="F:peptide-methionine (S)-S-oxide reductase activity"/>
    <property type="evidence" value="ECO:0007669"/>
    <property type="project" value="UniProtKB-UniRule"/>
</dbReference>
<dbReference type="GO" id="GO:0034599">
    <property type="term" value="P:cellular response to oxidative stress"/>
    <property type="evidence" value="ECO:0007669"/>
    <property type="project" value="TreeGrafter"/>
</dbReference>
<dbReference type="GO" id="GO:0036211">
    <property type="term" value="P:protein modification process"/>
    <property type="evidence" value="ECO:0007669"/>
    <property type="project" value="UniProtKB-UniRule"/>
</dbReference>
<dbReference type="FunFam" id="3.30.1060.10:FF:000001">
    <property type="entry name" value="Peptide methionine sulfoxide reductase MsrA"/>
    <property type="match status" value="1"/>
</dbReference>
<dbReference type="Gene3D" id="3.30.1060.10">
    <property type="entry name" value="Peptide methionine sulphoxide reductase MsrA"/>
    <property type="match status" value="1"/>
</dbReference>
<dbReference type="HAMAP" id="MF_01401">
    <property type="entry name" value="MsrA"/>
    <property type="match status" value="1"/>
</dbReference>
<dbReference type="InterPro" id="IPR002569">
    <property type="entry name" value="Met_Sox_Rdtase_MsrA_dom"/>
</dbReference>
<dbReference type="InterPro" id="IPR036509">
    <property type="entry name" value="Met_Sox_Rdtase_MsrA_sf"/>
</dbReference>
<dbReference type="InterPro" id="IPR050162">
    <property type="entry name" value="MsrA_MetSO_reductase"/>
</dbReference>
<dbReference type="NCBIfam" id="TIGR00401">
    <property type="entry name" value="msrA"/>
    <property type="match status" value="1"/>
</dbReference>
<dbReference type="PANTHER" id="PTHR42799">
    <property type="entry name" value="MITOCHONDRIAL PEPTIDE METHIONINE SULFOXIDE REDUCTASE"/>
    <property type="match status" value="1"/>
</dbReference>
<dbReference type="PANTHER" id="PTHR42799:SF2">
    <property type="entry name" value="MITOCHONDRIAL PEPTIDE METHIONINE SULFOXIDE REDUCTASE"/>
    <property type="match status" value="1"/>
</dbReference>
<dbReference type="Pfam" id="PF01625">
    <property type="entry name" value="PMSR"/>
    <property type="match status" value="1"/>
</dbReference>
<dbReference type="SUPFAM" id="SSF55068">
    <property type="entry name" value="Peptide methionine sulfoxide reductase"/>
    <property type="match status" value="1"/>
</dbReference>
<reference key="1">
    <citation type="journal article" date="2001" name="Science">
        <title>The genome of the natural genetic engineer Agrobacterium tumefaciens C58.</title>
        <authorList>
            <person name="Wood D.W."/>
            <person name="Setubal J.C."/>
            <person name="Kaul R."/>
            <person name="Monks D.E."/>
            <person name="Kitajima J.P."/>
            <person name="Okura V.K."/>
            <person name="Zhou Y."/>
            <person name="Chen L."/>
            <person name="Wood G.E."/>
            <person name="Almeida N.F. Jr."/>
            <person name="Woo L."/>
            <person name="Chen Y."/>
            <person name="Paulsen I.T."/>
            <person name="Eisen J.A."/>
            <person name="Karp P.D."/>
            <person name="Bovee D. Sr."/>
            <person name="Chapman P."/>
            <person name="Clendenning J."/>
            <person name="Deatherage G."/>
            <person name="Gillet W."/>
            <person name="Grant C."/>
            <person name="Kutyavin T."/>
            <person name="Levy R."/>
            <person name="Li M.-J."/>
            <person name="McClelland E."/>
            <person name="Palmieri A."/>
            <person name="Raymond C."/>
            <person name="Rouse G."/>
            <person name="Saenphimmachak C."/>
            <person name="Wu Z."/>
            <person name="Romero P."/>
            <person name="Gordon D."/>
            <person name="Zhang S."/>
            <person name="Yoo H."/>
            <person name="Tao Y."/>
            <person name="Biddle P."/>
            <person name="Jung M."/>
            <person name="Krespan W."/>
            <person name="Perry M."/>
            <person name="Gordon-Kamm B."/>
            <person name="Liao L."/>
            <person name="Kim S."/>
            <person name="Hendrick C."/>
            <person name="Zhao Z.-Y."/>
            <person name="Dolan M."/>
            <person name="Chumley F."/>
            <person name="Tingey S.V."/>
            <person name="Tomb J.-F."/>
            <person name="Gordon M.P."/>
            <person name="Olson M.V."/>
            <person name="Nester E.W."/>
        </authorList>
    </citation>
    <scope>NUCLEOTIDE SEQUENCE [LARGE SCALE GENOMIC DNA]</scope>
    <source>
        <strain>C58 / ATCC 33970</strain>
    </source>
</reference>
<reference key="2">
    <citation type="journal article" date="2001" name="Science">
        <title>Genome sequence of the plant pathogen and biotechnology agent Agrobacterium tumefaciens C58.</title>
        <authorList>
            <person name="Goodner B."/>
            <person name="Hinkle G."/>
            <person name="Gattung S."/>
            <person name="Miller N."/>
            <person name="Blanchard M."/>
            <person name="Qurollo B."/>
            <person name="Goldman B.S."/>
            <person name="Cao Y."/>
            <person name="Askenazi M."/>
            <person name="Halling C."/>
            <person name="Mullin L."/>
            <person name="Houmiel K."/>
            <person name="Gordon J."/>
            <person name="Vaudin M."/>
            <person name="Iartchouk O."/>
            <person name="Epp A."/>
            <person name="Liu F."/>
            <person name="Wollam C."/>
            <person name="Allinger M."/>
            <person name="Doughty D."/>
            <person name="Scott C."/>
            <person name="Lappas C."/>
            <person name="Markelz B."/>
            <person name="Flanagan C."/>
            <person name="Crowell C."/>
            <person name="Gurson J."/>
            <person name="Lomo C."/>
            <person name="Sear C."/>
            <person name="Strub G."/>
            <person name="Cielo C."/>
            <person name="Slater S."/>
        </authorList>
    </citation>
    <scope>NUCLEOTIDE SEQUENCE [LARGE SCALE GENOMIC DNA]</scope>
    <source>
        <strain>C58 / ATCC 33970</strain>
    </source>
</reference>
<proteinExistence type="inferred from homology"/>
<protein>
    <recommendedName>
        <fullName evidence="1">Peptide methionine sulfoxide reductase MsrA</fullName>
        <shortName evidence="1">Protein-methionine-S-oxide reductase</shortName>
        <ecNumber evidence="1">1.8.4.11</ecNumber>
    </recommendedName>
    <alternativeName>
        <fullName evidence="1">Peptide-methionine (S)-S-oxide reductase</fullName>
        <shortName evidence="1">Peptide Met(O) reductase</shortName>
    </alternativeName>
</protein>
<gene>
    <name evidence="1" type="primary">msrA</name>
    <name type="ordered locus">Atu0125</name>
    <name type="ORF">AGR_C_197</name>
</gene>
<keyword id="KW-0560">Oxidoreductase</keyword>
<keyword id="KW-1185">Reference proteome</keyword>
<organism>
    <name type="scientific">Agrobacterium fabrum (strain C58 / ATCC 33970)</name>
    <name type="common">Agrobacterium tumefaciens (strain C58)</name>
    <dbReference type="NCBI Taxonomy" id="176299"/>
    <lineage>
        <taxon>Bacteria</taxon>
        <taxon>Pseudomonadati</taxon>
        <taxon>Pseudomonadota</taxon>
        <taxon>Alphaproteobacteria</taxon>
        <taxon>Hyphomicrobiales</taxon>
        <taxon>Rhizobiaceae</taxon>
        <taxon>Rhizobium/Agrobacterium group</taxon>
        <taxon>Agrobacterium</taxon>
        <taxon>Agrobacterium tumefaciens complex</taxon>
    </lineage>
</organism>
<feature type="chain" id="PRO_1000068305" description="Peptide methionine sulfoxide reductase MsrA">
    <location>
        <begin position="1"/>
        <end position="216"/>
    </location>
</feature>
<feature type="active site" evidence="1">
    <location>
        <position position="57"/>
    </location>
</feature>
<sequence length="216" mass="23694">MFLFDTLSKKTTMPTEETALPGREEALAVPETHFVNGRPLKGPYPDGLEIIYLGMGCFWGAERLFWKTPGVWVTAVGYAGGFTRNPTYHETTTGQTGHAEVVKVVYDPAVISLSGLLKIFFEEHDPTQGMRQGNDVGTTYRSAIYATTEGQLQQAQKARDAFQQALDEAGHGHAITTEIGPLETFYYAEDYHQQYLAKNPGGYCGLRGTGVSCNIG</sequence>
<comment type="function">
    <text evidence="1">Has an important function as a repair enzyme for proteins that have been inactivated by oxidation. Catalyzes the reversible oxidation-reduction of methionine sulfoxide in proteins to methionine.</text>
</comment>
<comment type="catalytic activity">
    <reaction evidence="1">
        <text>L-methionyl-[protein] + [thioredoxin]-disulfide + H2O = L-methionyl-(S)-S-oxide-[protein] + [thioredoxin]-dithiol</text>
        <dbReference type="Rhea" id="RHEA:14217"/>
        <dbReference type="Rhea" id="RHEA-COMP:10698"/>
        <dbReference type="Rhea" id="RHEA-COMP:10700"/>
        <dbReference type="Rhea" id="RHEA-COMP:12313"/>
        <dbReference type="Rhea" id="RHEA-COMP:12315"/>
        <dbReference type="ChEBI" id="CHEBI:15377"/>
        <dbReference type="ChEBI" id="CHEBI:16044"/>
        <dbReference type="ChEBI" id="CHEBI:29950"/>
        <dbReference type="ChEBI" id="CHEBI:44120"/>
        <dbReference type="ChEBI" id="CHEBI:50058"/>
        <dbReference type="EC" id="1.8.4.11"/>
    </reaction>
</comment>
<comment type="catalytic activity">
    <reaction evidence="1">
        <text>[thioredoxin]-disulfide + L-methionine + H2O = L-methionine (S)-S-oxide + [thioredoxin]-dithiol</text>
        <dbReference type="Rhea" id="RHEA:19993"/>
        <dbReference type="Rhea" id="RHEA-COMP:10698"/>
        <dbReference type="Rhea" id="RHEA-COMP:10700"/>
        <dbReference type="ChEBI" id="CHEBI:15377"/>
        <dbReference type="ChEBI" id="CHEBI:29950"/>
        <dbReference type="ChEBI" id="CHEBI:50058"/>
        <dbReference type="ChEBI" id="CHEBI:57844"/>
        <dbReference type="ChEBI" id="CHEBI:58772"/>
        <dbReference type="EC" id="1.8.4.11"/>
    </reaction>
</comment>
<comment type="similarity">
    <text evidence="1">Belongs to the MsrA Met sulfoxide reductase family.</text>
</comment>
<evidence type="ECO:0000255" key="1">
    <source>
        <dbReference type="HAMAP-Rule" id="MF_01401"/>
    </source>
</evidence>
<name>MSRA_AGRFC</name>